<name>MNTP_OLEA2</name>
<dbReference type="EMBL" id="CP000112">
    <property type="protein sequence ID" value="ABB39772.1"/>
    <property type="molecule type" value="Genomic_DNA"/>
</dbReference>
<dbReference type="RefSeq" id="WP_011368747.1">
    <property type="nucleotide sequence ID" value="NC_007519.1"/>
</dbReference>
<dbReference type="STRING" id="207559.Dde_2978"/>
<dbReference type="KEGG" id="dde:Dde_2978"/>
<dbReference type="eggNOG" id="COG1971">
    <property type="taxonomic scope" value="Bacteria"/>
</dbReference>
<dbReference type="HOGENOM" id="CLU_096410_3_0_7"/>
<dbReference type="Proteomes" id="UP000002710">
    <property type="component" value="Chromosome"/>
</dbReference>
<dbReference type="GO" id="GO:0005886">
    <property type="term" value="C:plasma membrane"/>
    <property type="evidence" value="ECO:0007669"/>
    <property type="project" value="UniProtKB-SubCell"/>
</dbReference>
<dbReference type="GO" id="GO:0005384">
    <property type="term" value="F:manganese ion transmembrane transporter activity"/>
    <property type="evidence" value="ECO:0007669"/>
    <property type="project" value="UniProtKB-UniRule"/>
</dbReference>
<dbReference type="HAMAP" id="MF_01521">
    <property type="entry name" value="MntP_pump"/>
    <property type="match status" value="1"/>
</dbReference>
<dbReference type="InterPro" id="IPR003810">
    <property type="entry name" value="Mntp/YtaF"/>
</dbReference>
<dbReference type="InterPro" id="IPR022929">
    <property type="entry name" value="Put_MntP"/>
</dbReference>
<dbReference type="PANTHER" id="PTHR35529">
    <property type="entry name" value="MANGANESE EFFLUX PUMP MNTP-RELATED"/>
    <property type="match status" value="1"/>
</dbReference>
<dbReference type="PANTHER" id="PTHR35529:SF1">
    <property type="entry name" value="MANGANESE EFFLUX PUMP MNTP-RELATED"/>
    <property type="match status" value="1"/>
</dbReference>
<dbReference type="Pfam" id="PF02659">
    <property type="entry name" value="Mntp"/>
    <property type="match status" value="1"/>
</dbReference>
<keyword id="KW-0997">Cell inner membrane</keyword>
<keyword id="KW-1003">Cell membrane</keyword>
<keyword id="KW-0406">Ion transport</keyword>
<keyword id="KW-0464">Manganese</keyword>
<keyword id="KW-0472">Membrane</keyword>
<keyword id="KW-1185">Reference proteome</keyword>
<keyword id="KW-0812">Transmembrane</keyword>
<keyword id="KW-1133">Transmembrane helix</keyword>
<keyword id="KW-0813">Transport</keyword>
<proteinExistence type="inferred from homology"/>
<reference key="1">
    <citation type="journal article" date="2011" name="J. Bacteriol.">
        <title>Complete genome sequence and updated annotation of Desulfovibrio alaskensis G20.</title>
        <authorList>
            <person name="Hauser L.J."/>
            <person name="Land M.L."/>
            <person name="Brown S.D."/>
            <person name="Larimer F."/>
            <person name="Keller K.L."/>
            <person name="Rapp-Giles B.J."/>
            <person name="Price M.N."/>
            <person name="Lin M."/>
            <person name="Bruce D.C."/>
            <person name="Detter J.C."/>
            <person name="Tapia R."/>
            <person name="Han C.S."/>
            <person name="Goodwin L.A."/>
            <person name="Cheng J.F."/>
            <person name="Pitluck S."/>
            <person name="Copeland A."/>
            <person name="Lucas S."/>
            <person name="Nolan M."/>
            <person name="Lapidus A.L."/>
            <person name="Palumbo A.V."/>
            <person name="Wall J.D."/>
        </authorList>
    </citation>
    <scope>NUCLEOTIDE SEQUENCE [LARGE SCALE GENOMIC DNA]</scope>
    <source>
        <strain>ATCC BAA-1058 / DSM 17464 / G20</strain>
    </source>
</reference>
<organism>
    <name type="scientific">Oleidesulfovibrio alaskensis (strain ATCC BAA-1058 / DSM 17464 / G20)</name>
    <name type="common">Desulfovibrio alaskensis</name>
    <dbReference type="NCBI Taxonomy" id="207559"/>
    <lineage>
        <taxon>Bacteria</taxon>
        <taxon>Pseudomonadati</taxon>
        <taxon>Thermodesulfobacteriota</taxon>
        <taxon>Desulfovibrionia</taxon>
        <taxon>Desulfovibrionales</taxon>
        <taxon>Desulfovibrionaceae</taxon>
        <taxon>Oleidesulfovibrio</taxon>
    </lineage>
</organism>
<comment type="function">
    <text evidence="1">Probably functions as a manganese efflux pump.</text>
</comment>
<comment type="subcellular location">
    <subcellularLocation>
        <location evidence="1">Cell inner membrane</location>
        <topology evidence="1">Multi-pass membrane protein</topology>
    </subcellularLocation>
</comment>
<comment type="similarity">
    <text evidence="1">Belongs to the MntP (TC 9.B.29) family.</text>
</comment>
<sequence length="190" mass="19802">METPALLALAVALAMDALAVAVATGCRLRTVSARQTLRLAWHFGLFQAAMPIAGWFMGQGIRSFVDAWAHWIAFGLLAFIGLKMLKEAFEHDDAECGMADPTRGTSLIMLSVATSIDALAVGVTLSMLGLSIWMPAAVIGLVCLGLTAAGVQLGRVLAASSALSRYAEILGGAVLLGIGFKILHESGVFG</sequence>
<feature type="chain" id="PRO_0000296926" description="Putative manganese efflux pump MntP">
    <location>
        <begin position="1"/>
        <end position="190"/>
    </location>
</feature>
<feature type="transmembrane region" description="Helical" evidence="1">
    <location>
        <begin position="5"/>
        <end position="25"/>
    </location>
</feature>
<feature type="transmembrane region" description="Helical" evidence="1">
    <location>
        <begin position="41"/>
        <end position="61"/>
    </location>
</feature>
<feature type="transmembrane region" description="Helical" evidence="1">
    <location>
        <begin position="64"/>
        <end position="84"/>
    </location>
</feature>
<feature type="transmembrane region" description="Helical" evidence="1">
    <location>
        <begin position="105"/>
        <end position="125"/>
    </location>
</feature>
<feature type="transmembrane region" description="Helical" evidence="1">
    <location>
        <begin position="127"/>
        <end position="147"/>
    </location>
</feature>
<feature type="transmembrane region" description="Helical" evidence="1">
    <location>
        <begin position="169"/>
        <end position="189"/>
    </location>
</feature>
<protein>
    <recommendedName>
        <fullName evidence="1">Putative manganese efflux pump MntP</fullName>
    </recommendedName>
</protein>
<gene>
    <name evidence="1" type="primary">mntP</name>
    <name type="ordered locus">Dde_2978</name>
</gene>
<accession>Q30X24</accession>
<evidence type="ECO:0000255" key="1">
    <source>
        <dbReference type="HAMAP-Rule" id="MF_01521"/>
    </source>
</evidence>